<dbReference type="EMBL" id="X05607">
    <property type="protein sequence ID" value="CAA29096.1"/>
    <property type="molecule type" value="mRNA"/>
</dbReference>
<dbReference type="EMBL" id="M27891">
    <property type="protein sequence ID" value="AAA52164.1"/>
    <property type="molecule type" value="Genomic_DNA"/>
</dbReference>
<dbReference type="EMBL" id="M27889">
    <property type="protein sequence ID" value="AAA52164.1"/>
    <property type="status" value="JOINED"/>
    <property type="molecule type" value="Genomic_DNA"/>
</dbReference>
<dbReference type="EMBL" id="M27890">
    <property type="protein sequence ID" value="AAA52164.1"/>
    <property type="status" value="JOINED"/>
    <property type="molecule type" value="Genomic_DNA"/>
</dbReference>
<dbReference type="EMBL" id="X61681">
    <property type="protein sequence ID" value="CAA43856.2"/>
    <property type="molecule type" value="Genomic_DNA"/>
</dbReference>
<dbReference type="EMBL" id="X61682">
    <property type="protein sequence ID" value="CAA43856.2"/>
    <property type="status" value="JOINED"/>
    <property type="molecule type" value="Genomic_DNA"/>
</dbReference>
<dbReference type="EMBL" id="X61683">
    <property type="protein sequence ID" value="CAA43856.2"/>
    <property type="status" value="JOINED"/>
    <property type="molecule type" value="Genomic_DNA"/>
</dbReference>
<dbReference type="EMBL" id="X52255">
    <property type="protein sequence ID" value="CAA36497.1"/>
    <property type="molecule type" value="Genomic_DNA"/>
</dbReference>
<dbReference type="EMBL" id="AK312213">
    <property type="protein sequence ID" value="BAG35146.1"/>
    <property type="molecule type" value="mRNA"/>
</dbReference>
<dbReference type="EMBL" id="BT006839">
    <property type="protein sequence ID" value="AAP35485.1"/>
    <property type="molecule type" value="mRNA"/>
</dbReference>
<dbReference type="EMBL" id="CR541988">
    <property type="protein sequence ID" value="CAG46785.1"/>
    <property type="molecule type" value="mRNA"/>
</dbReference>
<dbReference type="EMBL" id="CR542018">
    <property type="protein sequence ID" value="CAG46815.1"/>
    <property type="molecule type" value="mRNA"/>
</dbReference>
<dbReference type="EMBL" id="AL121894">
    <property type="status" value="NOT_ANNOTATED_CDS"/>
    <property type="molecule type" value="Genomic_DNA"/>
</dbReference>
<dbReference type="EMBL" id="CH471133">
    <property type="protein sequence ID" value="EAX10137.1"/>
    <property type="molecule type" value="Genomic_DNA"/>
</dbReference>
<dbReference type="EMBL" id="CH471133">
    <property type="protein sequence ID" value="EAX10138.1"/>
    <property type="molecule type" value="Genomic_DNA"/>
</dbReference>
<dbReference type="EMBL" id="BC013083">
    <property type="protein sequence ID" value="AAH13083.1"/>
    <property type="molecule type" value="mRNA"/>
</dbReference>
<dbReference type="EMBL" id="BC110305">
    <property type="protein sequence ID" value="AAI10306.1"/>
    <property type="molecule type" value="mRNA"/>
</dbReference>
<dbReference type="CCDS" id="CCDS13158.1"/>
<dbReference type="PIR" id="S10216">
    <property type="entry name" value="UDHU"/>
</dbReference>
<dbReference type="RefSeq" id="NP_000090.1">
    <property type="nucleotide sequence ID" value="NM_000099.4"/>
</dbReference>
<dbReference type="RefSeq" id="NP_001275543.1">
    <property type="nucleotide sequence ID" value="NM_001288614.2"/>
</dbReference>
<dbReference type="PDB" id="1G96">
    <property type="method" value="X-ray"/>
    <property type="resolution" value="2.50 A"/>
    <property type="chains" value="A=27-146"/>
</dbReference>
<dbReference type="PDB" id="1R4C">
    <property type="method" value="X-ray"/>
    <property type="resolution" value="2.18 A"/>
    <property type="chains" value="A/B/C/D/E/F/G/H=37-146"/>
</dbReference>
<dbReference type="PDB" id="1TIJ">
    <property type="method" value="X-ray"/>
    <property type="resolution" value="3.03 A"/>
    <property type="chains" value="A/B=27-146"/>
</dbReference>
<dbReference type="PDB" id="3GAX">
    <property type="method" value="X-ray"/>
    <property type="resolution" value="1.70 A"/>
    <property type="chains" value="A/B=27-146"/>
</dbReference>
<dbReference type="PDB" id="3NX0">
    <property type="method" value="X-ray"/>
    <property type="resolution" value="2.04 A"/>
    <property type="chains" value="A/B=27-146"/>
</dbReference>
<dbReference type="PDB" id="3PS8">
    <property type="method" value="X-ray"/>
    <property type="resolution" value="2.55 A"/>
    <property type="chains" value="A=27-146"/>
</dbReference>
<dbReference type="PDB" id="3QRD">
    <property type="method" value="X-ray"/>
    <property type="resolution" value="2.19 A"/>
    <property type="chains" value="A/B/C/D=27-146"/>
</dbReference>
<dbReference type="PDB" id="3S67">
    <property type="method" value="X-ray"/>
    <property type="resolution" value="2.26 A"/>
    <property type="chains" value="A=27-146"/>
</dbReference>
<dbReference type="PDB" id="3SVA">
    <property type="method" value="X-ray"/>
    <property type="resolution" value="3.02 A"/>
    <property type="chains" value="A=27-146"/>
</dbReference>
<dbReference type="PDB" id="6ROA">
    <property type="method" value="X-ray"/>
    <property type="resolution" value="2.65 A"/>
    <property type="chains" value="A/B=27-146"/>
</dbReference>
<dbReference type="PDB" id="6RPV">
    <property type="method" value="Other"/>
    <property type="chains" value="A=27-146"/>
</dbReference>
<dbReference type="PDBsum" id="1G96"/>
<dbReference type="PDBsum" id="1R4C"/>
<dbReference type="PDBsum" id="1TIJ"/>
<dbReference type="PDBsum" id="3GAX"/>
<dbReference type="PDBsum" id="3NX0"/>
<dbReference type="PDBsum" id="3PS8"/>
<dbReference type="PDBsum" id="3QRD"/>
<dbReference type="PDBsum" id="3S67"/>
<dbReference type="PDBsum" id="3SVA"/>
<dbReference type="PDBsum" id="6ROA"/>
<dbReference type="PDBsum" id="6RPV"/>
<dbReference type="SMR" id="P01034"/>
<dbReference type="BioGRID" id="107853">
    <property type="interactions" value="31"/>
</dbReference>
<dbReference type="FunCoup" id="P01034">
    <property type="interactions" value="221"/>
</dbReference>
<dbReference type="IntAct" id="P01034">
    <property type="interactions" value="22"/>
</dbReference>
<dbReference type="MINT" id="P01034"/>
<dbReference type="STRING" id="9606.ENSP00000381448"/>
<dbReference type="MEROPS" id="I25.004"/>
<dbReference type="iPTMnet" id="P01034"/>
<dbReference type="MetOSite" id="P01034"/>
<dbReference type="PhosphoSitePlus" id="P01034"/>
<dbReference type="SwissPalm" id="P01034"/>
<dbReference type="BioMuta" id="CST3"/>
<dbReference type="DMDM" id="118183"/>
<dbReference type="CPTAC" id="non-CPTAC-1114"/>
<dbReference type="jPOST" id="P01034"/>
<dbReference type="MassIVE" id="P01034"/>
<dbReference type="PaxDb" id="9606-ENSP00000381448"/>
<dbReference type="PeptideAtlas" id="P01034"/>
<dbReference type="PRIDE" id="P01034"/>
<dbReference type="ProteomicsDB" id="51311"/>
<dbReference type="Antibodypedia" id="2285">
    <property type="antibodies" value="1505 antibodies from 46 providers"/>
</dbReference>
<dbReference type="DNASU" id="1471"/>
<dbReference type="Ensembl" id="ENST00000376925.8">
    <property type="protein sequence ID" value="ENSP00000366124.3"/>
    <property type="gene ID" value="ENSG00000101439.9"/>
</dbReference>
<dbReference type="Ensembl" id="ENST00000398409.1">
    <property type="protein sequence ID" value="ENSP00000381446.1"/>
    <property type="gene ID" value="ENSG00000101439.9"/>
</dbReference>
<dbReference type="Ensembl" id="ENST00000398411.5">
    <property type="protein sequence ID" value="ENSP00000381448.1"/>
    <property type="gene ID" value="ENSG00000101439.9"/>
</dbReference>
<dbReference type="GeneID" id="1471"/>
<dbReference type="KEGG" id="hsa:1471"/>
<dbReference type="MANE-Select" id="ENST00000376925.8">
    <property type="protein sequence ID" value="ENSP00000366124.3"/>
    <property type="RefSeq nucleotide sequence ID" value="NM_000099.4"/>
    <property type="RefSeq protein sequence ID" value="NP_000090.1"/>
</dbReference>
<dbReference type="UCSC" id="uc002wtm.5">
    <property type="organism name" value="human"/>
</dbReference>
<dbReference type="AGR" id="HGNC:2475"/>
<dbReference type="CTD" id="1471"/>
<dbReference type="DisGeNET" id="1471"/>
<dbReference type="GeneCards" id="CST3"/>
<dbReference type="HGNC" id="HGNC:2475">
    <property type="gene designation" value="CST3"/>
</dbReference>
<dbReference type="HPA" id="ENSG00000101439">
    <property type="expression patterns" value="Tissue enhanced (brain, choroid plexus)"/>
</dbReference>
<dbReference type="MalaCards" id="CST3"/>
<dbReference type="MIM" id="105150">
    <property type="type" value="phenotype"/>
</dbReference>
<dbReference type="MIM" id="604312">
    <property type="type" value="gene"/>
</dbReference>
<dbReference type="MIM" id="611953">
    <property type="type" value="phenotype"/>
</dbReference>
<dbReference type="neXtProt" id="NX_P01034"/>
<dbReference type="OpenTargets" id="ENSG00000101439"/>
<dbReference type="Orphanet" id="100008">
    <property type="disease" value="ACys amyloidosis"/>
</dbReference>
<dbReference type="PharmGKB" id="PA26976"/>
<dbReference type="VEuPathDB" id="HostDB:ENSG00000101439"/>
<dbReference type="eggNOG" id="ENOG502SC50">
    <property type="taxonomic scope" value="Eukaryota"/>
</dbReference>
<dbReference type="GeneTree" id="ENSGT00940000154755"/>
<dbReference type="HOGENOM" id="CLU_118168_0_1_1"/>
<dbReference type="InParanoid" id="P01034"/>
<dbReference type="OMA" id="VKSSCQD"/>
<dbReference type="OrthoDB" id="1908104at2759"/>
<dbReference type="PAN-GO" id="P01034">
    <property type="GO annotations" value="5 GO annotations based on evolutionary models"/>
</dbReference>
<dbReference type="PhylomeDB" id="P01034"/>
<dbReference type="PathwayCommons" id="P01034"/>
<dbReference type="Reactome" id="R-HSA-381426">
    <property type="pathway name" value="Regulation of Insulin-like Growth Factor (IGF) transport and uptake by Insulin-like Growth Factor Binding Proteins (IGFBPs)"/>
</dbReference>
<dbReference type="Reactome" id="R-HSA-6798695">
    <property type="pathway name" value="Neutrophil degranulation"/>
</dbReference>
<dbReference type="Reactome" id="R-HSA-8957275">
    <property type="pathway name" value="Post-translational protein phosphorylation"/>
</dbReference>
<dbReference type="Reactome" id="R-HSA-977225">
    <property type="pathway name" value="Amyloid fiber formation"/>
</dbReference>
<dbReference type="SignaLink" id="P01034"/>
<dbReference type="BioGRID-ORCS" id="1471">
    <property type="hits" value="15 hits in 1161 CRISPR screens"/>
</dbReference>
<dbReference type="ChiTaRS" id="CST3">
    <property type="organism name" value="human"/>
</dbReference>
<dbReference type="EvolutionaryTrace" id="P01034"/>
<dbReference type="GeneWiki" id="Cystatin_C"/>
<dbReference type="GenomeRNAi" id="1471"/>
<dbReference type="Pharos" id="P01034">
    <property type="development level" value="Tbio"/>
</dbReference>
<dbReference type="PRO" id="PR:P01034"/>
<dbReference type="Proteomes" id="UP000005640">
    <property type="component" value="Chromosome 20"/>
</dbReference>
<dbReference type="RNAct" id="P01034">
    <property type="molecule type" value="protein"/>
</dbReference>
<dbReference type="Bgee" id="ENSG00000101439">
    <property type="expression patterns" value="Expressed in right frontal lobe and 198 other cell types or tissues"/>
</dbReference>
<dbReference type="ExpressionAtlas" id="P01034">
    <property type="expression patterns" value="baseline and differential"/>
</dbReference>
<dbReference type="GO" id="GO:0005737">
    <property type="term" value="C:cytoplasm"/>
    <property type="evidence" value="ECO:0000318"/>
    <property type="project" value="GO_Central"/>
</dbReference>
<dbReference type="GO" id="GO:0005783">
    <property type="term" value="C:endoplasmic reticulum"/>
    <property type="evidence" value="ECO:0000304"/>
    <property type="project" value="ARUK-UCL"/>
</dbReference>
<dbReference type="GO" id="GO:0005788">
    <property type="term" value="C:endoplasmic reticulum lumen"/>
    <property type="evidence" value="ECO:0000304"/>
    <property type="project" value="Reactome"/>
</dbReference>
<dbReference type="GO" id="GO:0070062">
    <property type="term" value="C:extracellular exosome"/>
    <property type="evidence" value="ECO:0007005"/>
    <property type="project" value="UniProtKB"/>
</dbReference>
<dbReference type="GO" id="GO:0005576">
    <property type="term" value="C:extracellular region"/>
    <property type="evidence" value="ECO:0000315"/>
    <property type="project" value="BHF-UCL"/>
</dbReference>
<dbReference type="GO" id="GO:0005615">
    <property type="term" value="C:extracellular space"/>
    <property type="evidence" value="ECO:0000314"/>
    <property type="project" value="UniProtKB"/>
</dbReference>
<dbReference type="GO" id="GO:1904813">
    <property type="term" value="C:ficolin-1-rich granule lumen"/>
    <property type="evidence" value="ECO:0000304"/>
    <property type="project" value="Reactome"/>
</dbReference>
<dbReference type="GO" id="GO:0005794">
    <property type="term" value="C:Golgi apparatus"/>
    <property type="evidence" value="ECO:0000314"/>
    <property type="project" value="ARUK-UCL"/>
</dbReference>
<dbReference type="GO" id="GO:0005886">
    <property type="term" value="C:plasma membrane"/>
    <property type="evidence" value="ECO:0000314"/>
    <property type="project" value="ARUK-UCL"/>
</dbReference>
<dbReference type="GO" id="GO:1904724">
    <property type="term" value="C:tertiary granule lumen"/>
    <property type="evidence" value="ECO:0000304"/>
    <property type="project" value="Reactome"/>
</dbReference>
<dbReference type="GO" id="GO:0031982">
    <property type="term" value="C:vesicle"/>
    <property type="evidence" value="ECO:0000318"/>
    <property type="project" value="GO_Central"/>
</dbReference>
<dbReference type="GO" id="GO:0001540">
    <property type="term" value="F:amyloid-beta binding"/>
    <property type="evidence" value="ECO:0000353"/>
    <property type="project" value="BHF-UCL"/>
</dbReference>
<dbReference type="GO" id="GO:0004869">
    <property type="term" value="F:cysteine-type endopeptidase inhibitor activity"/>
    <property type="evidence" value="ECO:0000314"/>
    <property type="project" value="UniProtKB"/>
</dbReference>
<dbReference type="GO" id="GO:0004866">
    <property type="term" value="F:endopeptidase inhibitor activity"/>
    <property type="evidence" value="ECO:0000314"/>
    <property type="project" value="UniProtKB"/>
</dbReference>
<dbReference type="GO" id="GO:0042802">
    <property type="term" value="F:identical protein binding"/>
    <property type="evidence" value="ECO:0000353"/>
    <property type="project" value="IntAct"/>
</dbReference>
<dbReference type="GO" id="GO:0030414">
    <property type="term" value="F:peptidase inhibitor activity"/>
    <property type="evidence" value="ECO:0000314"/>
    <property type="project" value="ARUK-UCL"/>
</dbReference>
<dbReference type="GO" id="GO:0002020">
    <property type="term" value="F:protease binding"/>
    <property type="evidence" value="ECO:0000353"/>
    <property type="project" value="BHF-UCL"/>
</dbReference>
<dbReference type="GO" id="GO:0006952">
    <property type="term" value="P:defense response"/>
    <property type="evidence" value="ECO:0000314"/>
    <property type="project" value="BHF-UCL"/>
</dbReference>
<dbReference type="GO" id="GO:0006955">
    <property type="term" value="P:immune response"/>
    <property type="evidence" value="ECO:0000304"/>
    <property type="project" value="ARUK-UCL"/>
</dbReference>
<dbReference type="GO" id="GO:0060313">
    <property type="term" value="P:negative regulation of blood vessel remodeling"/>
    <property type="evidence" value="ECO:0000315"/>
    <property type="project" value="BHF-UCL"/>
</dbReference>
<dbReference type="GO" id="GO:0010711">
    <property type="term" value="P:negative regulation of collagen catabolic process"/>
    <property type="evidence" value="ECO:0000315"/>
    <property type="project" value="BHF-UCL"/>
</dbReference>
<dbReference type="GO" id="GO:0060311">
    <property type="term" value="P:negative regulation of elastin catabolic process"/>
    <property type="evidence" value="ECO:0000315"/>
    <property type="project" value="BHF-UCL"/>
</dbReference>
<dbReference type="GO" id="GO:0010716">
    <property type="term" value="P:negative regulation of extracellular matrix disassembly"/>
    <property type="evidence" value="ECO:0000315"/>
    <property type="project" value="BHF-UCL"/>
</dbReference>
<dbReference type="GO" id="GO:0010466">
    <property type="term" value="P:negative regulation of peptidase activity"/>
    <property type="evidence" value="ECO:0000314"/>
    <property type="project" value="BHF-UCL"/>
</dbReference>
<dbReference type="GO" id="GO:0045861">
    <property type="term" value="P:negative regulation of proteolysis"/>
    <property type="evidence" value="ECO:0000314"/>
    <property type="project" value="UniProtKB"/>
</dbReference>
<dbReference type="GO" id="GO:0034103">
    <property type="term" value="P:regulation of tissue remodeling"/>
    <property type="evidence" value="ECO:0000315"/>
    <property type="project" value="BHF-UCL"/>
</dbReference>
<dbReference type="GO" id="GO:0097435">
    <property type="term" value="P:supramolecular fiber organization"/>
    <property type="evidence" value="ECO:0000316"/>
    <property type="project" value="BHF-UCL"/>
</dbReference>
<dbReference type="CDD" id="cd00042">
    <property type="entry name" value="CY"/>
    <property type="match status" value="1"/>
</dbReference>
<dbReference type="FunFam" id="3.10.450.10:FF:000004">
    <property type="entry name" value="Cystatin C"/>
    <property type="match status" value="1"/>
</dbReference>
<dbReference type="Gene3D" id="3.10.450.10">
    <property type="match status" value="1"/>
</dbReference>
<dbReference type="InterPro" id="IPR000010">
    <property type="entry name" value="Cystatin_dom"/>
</dbReference>
<dbReference type="InterPro" id="IPR046350">
    <property type="entry name" value="Cystatin_sf"/>
</dbReference>
<dbReference type="InterPro" id="IPR018073">
    <property type="entry name" value="Prot_inh_cystat_CS"/>
</dbReference>
<dbReference type="PANTHER" id="PTHR46186">
    <property type="entry name" value="CYSTATIN"/>
    <property type="match status" value="1"/>
</dbReference>
<dbReference type="PANTHER" id="PTHR46186:SF10">
    <property type="entry name" value="CYSTATIN-C"/>
    <property type="match status" value="1"/>
</dbReference>
<dbReference type="Pfam" id="PF00031">
    <property type="entry name" value="Cystatin"/>
    <property type="match status" value="1"/>
</dbReference>
<dbReference type="SMART" id="SM00043">
    <property type="entry name" value="CY"/>
    <property type="match status" value="1"/>
</dbReference>
<dbReference type="SUPFAM" id="SSF54403">
    <property type="entry name" value="Cystatin/monellin"/>
    <property type="match status" value="1"/>
</dbReference>
<dbReference type="PROSITE" id="PS00287">
    <property type="entry name" value="CYSTATIN"/>
    <property type="match status" value="1"/>
</dbReference>
<sequence length="146" mass="15799">MAGPLRAPLLLLAILAVALAVSPAAGSSPGKPPRLVGGPMDASVEEEGVRRALDFAVGEYNKASNDMYHSRALQVVRARKQIVAGVNYFLDVELGRTTCTKTQPNLDNCPFHDQPHLKRKAFCSFQIYAVPWQGTMTLSKSTCQDA</sequence>
<accession>P01034</accession>
<accession>B2R5J9</accession>
<accession>D3DW42</accession>
<accession>Q6FGW9</accession>
<organism>
    <name type="scientific">Homo sapiens</name>
    <name type="common">Human</name>
    <dbReference type="NCBI Taxonomy" id="9606"/>
    <lineage>
        <taxon>Eukaryota</taxon>
        <taxon>Metazoa</taxon>
        <taxon>Chordata</taxon>
        <taxon>Craniata</taxon>
        <taxon>Vertebrata</taxon>
        <taxon>Euteleostomi</taxon>
        <taxon>Mammalia</taxon>
        <taxon>Eutheria</taxon>
        <taxon>Euarchontoglires</taxon>
        <taxon>Primates</taxon>
        <taxon>Haplorrhini</taxon>
        <taxon>Catarrhini</taxon>
        <taxon>Hominidae</taxon>
        <taxon>Homo</taxon>
    </lineage>
</organism>
<gene>
    <name type="primary">CST3</name>
</gene>
<proteinExistence type="evidence at protein level"/>
<name>CYTC_HUMAN</name>
<keyword id="KW-0002">3D-structure</keyword>
<keyword id="KW-0913">Age-related macular degeneration</keyword>
<keyword id="KW-0034">Amyloid</keyword>
<keyword id="KW-1008">Amyloidosis</keyword>
<keyword id="KW-0903">Direct protein sequencing</keyword>
<keyword id="KW-0225">Disease variant</keyword>
<keyword id="KW-1015">Disulfide bond</keyword>
<keyword id="KW-0325">Glycoprotein</keyword>
<keyword id="KW-0597">Phosphoprotein</keyword>
<keyword id="KW-0646">Protease inhibitor</keyword>
<keyword id="KW-1267">Proteomics identification</keyword>
<keyword id="KW-1185">Reference proteome</keyword>
<keyword id="KW-0964">Secreted</keyword>
<keyword id="KW-0732">Signal</keyword>
<keyword id="KW-0789">Thiol protease inhibitor</keyword>
<comment type="function">
    <text>As an inhibitor of cysteine proteinases, this protein is thought to serve an important physiological role as a local regulator of this enzyme activity.</text>
</comment>
<comment type="subunit">
    <text>Homodimer.</text>
</comment>
<comment type="interaction">
    <interactant intactId="EBI-948622">
        <id>P01034</id>
    </interactant>
    <interactant intactId="EBI-77613">
        <id>P05067</id>
        <label>APP</label>
    </interactant>
    <organismsDiffer>false</organismsDiffer>
    <experiments>3</experiments>
</comment>
<comment type="interaction">
    <interactant intactId="EBI-948622">
        <id>P01034</id>
    </interactant>
    <interactant intactId="EBI-948622">
        <id>P01034</id>
        <label>CST3</label>
    </interactant>
    <organismsDiffer>false</organismsDiffer>
    <experiments>8</experiments>
</comment>
<comment type="interaction">
    <interactant intactId="EBI-29036734">
        <id>PRO_0000006639</id>
    </interactant>
    <interactant intactId="EBI-29020361">
        <id>PRO_0000026502</id>
        <label>LGMN</label>
        <dbReference type="UniProtKB" id="Q99538"/>
    </interactant>
    <organismsDiffer>false</organismsDiffer>
    <experiments>4</experiments>
</comment>
<comment type="subcellular location">
    <subcellularLocation>
        <location evidence="9">Secreted</location>
    </subcellularLocation>
</comment>
<comment type="tissue specificity">
    <text evidence="4 9">Expressed in submandibular and sublingual saliva but not in parotid saliva (at protein level). Expressed in various body fluids, such as the cerebrospinal fluid and plasma. Expressed in highest levels in the epididymis, vas deferens, brain, thymus, and ovary and the lowest in the submandibular gland.</text>
</comment>
<comment type="PTM">
    <text evidence="8">The Thr-25 variant is O-glycosylated with a core 1 or possibly core 8 glycan. The signal peptide of the O-glycosylated Thr-25 variant is cleaved between Ala-20 and Val-21.</text>
</comment>
<comment type="mass spectrometry" mass="13334.583" error="0.014" method="Electrospray" evidence="9"/>
<comment type="disease" evidence="3 10">
    <disease id="DI-00102">
        <name>Cerebral amyloid angiopathy, CST3-related</name>
        <acronym>CAA-CST3</acronym>
        <description>An autosomal dominant disorder characterized by cystatin C amyloid accumulation in the walls of arteries, arterioles, and sometimes capillaries and veins of the brain, and in various organs including lymphoid tissue, spleen, salivary glands, and seminal vesicles. Amyloid deposition in the cerebral vessels results in intracranial hemorrhage and premature stroke. Cystatin C levels in the cerebrospinal fluid are abnormally low.</description>
        <dbReference type="MIM" id="105150"/>
    </disease>
    <text>The disease is caused by variants affecting the gene represented in this entry.</text>
</comment>
<comment type="disease" evidence="2 8 12">
    <disease id="DI-00064">
        <name>Macular degeneration, age-related, 11</name>
        <acronym>ARMD11</acronym>
        <description>A form of age-related macular degeneration, a multifactorial eye disease and the most common cause of irreversible vision loss in the developed world. In most patients, the disease is manifest as ophthalmoscopically visible yellowish accumulations of protein and lipid that lie beneath the retinal pigment epithelium and within an elastin-containing structure known as Bruch membrane.</description>
        <dbReference type="MIM" id="611953"/>
    </disease>
    <text>Disease susceptibility is associated with variants affecting the gene represented in this entry.</text>
</comment>
<comment type="miscellaneous">
    <text>Potential cerebrospinal fluid marker for the diagnosis of Creutzfeldt-Jakob disease.</text>
</comment>
<comment type="similarity">
    <text evidence="17">Belongs to the cystatin family.</text>
</comment>
<evidence type="ECO:0000269" key="1">
    <source>
    </source>
</evidence>
<evidence type="ECO:0000269" key="2">
    <source>
    </source>
</evidence>
<evidence type="ECO:0000269" key="3">
    <source>
    </source>
</evidence>
<evidence type="ECO:0000269" key="4">
    <source>
    </source>
</evidence>
<evidence type="ECO:0000269" key="5">
    <source>
    </source>
</evidence>
<evidence type="ECO:0000269" key="6">
    <source>
    </source>
</evidence>
<evidence type="ECO:0000269" key="7">
    <source>
    </source>
</evidence>
<evidence type="ECO:0000269" key="8">
    <source>
    </source>
</evidence>
<evidence type="ECO:0000269" key="9">
    <source>
    </source>
</evidence>
<evidence type="ECO:0000269" key="10">
    <source>
    </source>
</evidence>
<evidence type="ECO:0000269" key="11">
    <source>
    </source>
</evidence>
<evidence type="ECO:0000269" key="12">
    <source>
    </source>
</evidence>
<evidence type="ECO:0000269" key="13">
    <source>
    </source>
</evidence>
<evidence type="ECO:0000269" key="14">
    <source>
    </source>
</evidence>
<evidence type="ECO:0000269" key="15">
    <source>
    </source>
</evidence>
<evidence type="ECO:0000269" key="16">
    <source>
    </source>
</evidence>
<evidence type="ECO:0000305" key="17"/>
<evidence type="ECO:0000312" key="18">
    <source>
        <dbReference type="PDB" id="1G96"/>
    </source>
</evidence>
<evidence type="ECO:0000312" key="19">
    <source>
        <dbReference type="PDB" id="1TIJ"/>
    </source>
</evidence>
<evidence type="ECO:0007744" key="20">
    <source>
        <dbReference type="PDB" id="1G96"/>
    </source>
</evidence>
<evidence type="ECO:0007744" key="21">
    <source>
        <dbReference type="PDB" id="1TIJ"/>
    </source>
</evidence>
<evidence type="ECO:0007829" key="22">
    <source>
        <dbReference type="PDB" id="1R4C"/>
    </source>
</evidence>
<evidence type="ECO:0007829" key="23">
    <source>
        <dbReference type="PDB" id="3GAX"/>
    </source>
</evidence>
<feature type="signal peptide" evidence="5 14 15 16">
    <location>
        <begin position="1"/>
        <end position="26"/>
    </location>
</feature>
<feature type="chain" id="PRO_0000006639" description="Cystatin-C" evidence="10 13">
    <location>
        <begin position="27"/>
        <end position="146"/>
    </location>
</feature>
<feature type="short sequence motif" description="Secondary area of contact">
    <location>
        <begin position="81"/>
        <end position="85"/>
    </location>
</feature>
<feature type="site" description="Reactive site">
    <location>
        <position position="37"/>
    </location>
</feature>
<feature type="modified residue" description="Phosphoserine; by FAM20C" evidence="11">
    <location>
        <position position="43"/>
    </location>
</feature>
<feature type="disulfide bond" evidence="1 6 20 21">
    <location>
        <begin position="99"/>
        <end position="109"/>
    </location>
</feature>
<feature type="disulfide bond" evidence="1 6 20 21">
    <location>
        <begin position="123"/>
        <end position="143"/>
    </location>
</feature>
<feature type="sequence variant" id="VAR_011893" description="In ARMD11; likely benign; alters processing and glycosylation; dbSNP:rs1064039." evidence="8 12">
    <original>A</original>
    <variation>T</variation>
    <location>
        <position position="25"/>
    </location>
</feature>
<feature type="sequence variant" id="VAR_002207" description="In CAA-CST3; dbSNP:rs28939068." evidence="3 10">
    <original>L</original>
    <variation>Q</variation>
    <location>
        <position position="94"/>
    </location>
</feature>
<feature type="mutagenesis site" description="Shows a dual distribution to the Golgi apparatus and to the mitochondria." evidence="7">
    <original>A</original>
    <variation>S</variation>
    <location>
        <position position="25"/>
    </location>
</feature>
<feature type="strand" evidence="23">
    <location>
        <begin position="40"/>
        <end position="42"/>
    </location>
</feature>
<feature type="helix" evidence="23">
    <location>
        <begin position="47"/>
        <end position="63"/>
    </location>
</feature>
<feature type="strand" evidence="23">
    <location>
        <begin position="67"/>
        <end position="101"/>
    </location>
</feature>
<feature type="helix" evidence="22">
    <location>
        <begin position="106"/>
        <end position="108"/>
    </location>
</feature>
<feature type="helix" evidence="23">
    <location>
        <begin position="115"/>
        <end position="118"/>
    </location>
</feature>
<feature type="strand" evidence="23">
    <location>
        <begin position="121"/>
        <end position="130"/>
    </location>
</feature>
<feature type="turn" evidence="23">
    <location>
        <begin position="131"/>
        <end position="134"/>
    </location>
</feature>
<feature type="strand" evidence="23">
    <location>
        <begin position="135"/>
        <end position="145"/>
    </location>
</feature>
<reference key="1">
    <citation type="journal article" date="1987" name="FEBS Lett.">
        <title>Molecular cloning and sequence analysis of cDNA coding for the precursor of the human cysteine proteinase inhibitor cystatin C.</title>
        <authorList>
            <person name="Abrahamson M."/>
            <person name="Grubb A."/>
            <person name="Olafsson I."/>
            <person name="Lundwall A."/>
        </authorList>
    </citation>
    <scope>NUCLEOTIDE SEQUENCE [MRNA]</scope>
    <source>
        <tissue>Placenta</tissue>
    </source>
</reference>
<reference key="2">
    <citation type="journal article" date="1989" name="Biochem. Biophys. Res. Commun.">
        <title>The human cystatin C gene (CST3) is a member of the cystatin gene family which is localized on chromosome 20.</title>
        <authorList>
            <person name="Saitoh E."/>
            <person name="Sabatini L.M."/>
            <person name="Eddy R.L."/>
            <person name="Shows T.B."/>
            <person name="Azen E.A."/>
            <person name="Isemura S."/>
            <person name="Sanada K."/>
        </authorList>
    </citation>
    <scope>NUCLEOTIDE SEQUENCE [GENOMIC DNA]</scope>
    <scope>VARIANT ARMD11 THR-25</scope>
</reference>
<reference key="3">
    <citation type="journal article" date="1989" name="J. Exp. Med.">
        <title>Stroke in Icelandic patients with hereditary amyloid angiopathy is related to a mutation in the cystatin C gene, an inhibitor of cysteine proteases.</title>
        <authorList>
            <person name="Levy E."/>
            <person name="Lopez-Otin C."/>
            <person name="Ghiso J."/>
            <person name="Geltner D."/>
            <person name="Frangione B."/>
        </authorList>
    </citation>
    <scope>NUCLEOTIDE SEQUENCE [GENOMIC DNA]</scope>
    <scope>VARIANT CAA-CST3 GLN-94</scope>
    <scope>INVOLVEMENT IN CAA-CST3</scope>
    <source>
        <tissue>Brain</tissue>
    </source>
</reference>
<reference key="4">
    <citation type="journal article" date="1990" name="Biochem. J.">
        <title>Structure and expression of the human cystatin C gene.</title>
        <authorList>
            <person name="Abrahamson M."/>
            <person name="Olafsson I."/>
            <person name="Palsdottir A."/>
            <person name="Ulvsbaeck M."/>
            <person name="Lundwall A."/>
            <person name="Jensson O."/>
            <person name="Grubb A."/>
        </authorList>
    </citation>
    <scope>NUCLEOTIDE SEQUENCE [GENOMIC DNA]</scope>
    <source>
        <tissue>Leukocyte</tissue>
    </source>
</reference>
<reference key="5">
    <citation type="journal article" date="2004" name="Nat. Genet.">
        <title>Complete sequencing and characterization of 21,243 full-length human cDNAs.</title>
        <authorList>
            <person name="Ota T."/>
            <person name="Suzuki Y."/>
            <person name="Nishikawa T."/>
            <person name="Otsuki T."/>
            <person name="Sugiyama T."/>
            <person name="Irie R."/>
            <person name="Wakamatsu A."/>
            <person name="Hayashi K."/>
            <person name="Sato H."/>
            <person name="Nagai K."/>
            <person name="Kimura K."/>
            <person name="Makita H."/>
            <person name="Sekine M."/>
            <person name="Obayashi M."/>
            <person name="Nishi T."/>
            <person name="Shibahara T."/>
            <person name="Tanaka T."/>
            <person name="Ishii S."/>
            <person name="Yamamoto J."/>
            <person name="Saito K."/>
            <person name="Kawai Y."/>
            <person name="Isono Y."/>
            <person name="Nakamura Y."/>
            <person name="Nagahari K."/>
            <person name="Murakami K."/>
            <person name="Yasuda T."/>
            <person name="Iwayanagi T."/>
            <person name="Wagatsuma M."/>
            <person name="Shiratori A."/>
            <person name="Sudo H."/>
            <person name="Hosoiri T."/>
            <person name="Kaku Y."/>
            <person name="Kodaira H."/>
            <person name="Kondo H."/>
            <person name="Sugawara M."/>
            <person name="Takahashi M."/>
            <person name="Kanda K."/>
            <person name="Yokoi T."/>
            <person name="Furuya T."/>
            <person name="Kikkawa E."/>
            <person name="Omura Y."/>
            <person name="Abe K."/>
            <person name="Kamihara K."/>
            <person name="Katsuta N."/>
            <person name="Sato K."/>
            <person name="Tanikawa M."/>
            <person name="Yamazaki M."/>
            <person name="Ninomiya K."/>
            <person name="Ishibashi T."/>
            <person name="Yamashita H."/>
            <person name="Murakawa K."/>
            <person name="Fujimori K."/>
            <person name="Tanai H."/>
            <person name="Kimata M."/>
            <person name="Watanabe M."/>
            <person name="Hiraoka S."/>
            <person name="Chiba Y."/>
            <person name="Ishida S."/>
            <person name="Ono Y."/>
            <person name="Takiguchi S."/>
            <person name="Watanabe S."/>
            <person name="Yosida M."/>
            <person name="Hotuta T."/>
            <person name="Kusano J."/>
            <person name="Kanehori K."/>
            <person name="Takahashi-Fujii A."/>
            <person name="Hara H."/>
            <person name="Tanase T.-O."/>
            <person name="Nomura Y."/>
            <person name="Togiya S."/>
            <person name="Komai F."/>
            <person name="Hara R."/>
            <person name="Takeuchi K."/>
            <person name="Arita M."/>
            <person name="Imose N."/>
            <person name="Musashino K."/>
            <person name="Yuuki H."/>
            <person name="Oshima A."/>
            <person name="Sasaki N."/>
            <person name="Aotsuka S."/>
            <person name="Yoshikawa Y."/>
            <person name="Matsunawa H."/>
            <person name="Ichihara T."/>
            <person name="Shiohata N."/>
            <person name="Sano S."/>
            <person name="Moriya S."/>
            <person name="Momiyama H."/>
            <person name="Satoh N."/>
            <person name="Takami S."/>
            <person name="Terashima Y."/>
            <person name="Suzuki O."/>
            <person name="Nakagawa S."/>
            <person name="Senoh A."/>
            <person name="Mizoguchi H."/>
            <person name="Goto Y."/>
            <person name="Shimizu F."/>
            <person name="Wakebe H."/>
            <person name="Hishigaki H."/>
            <person name="Watanabe T."/>
            <person name="Sugiyama A."/>
            <person name="Takemoto M."/>
            <person name="Kawakami B."/>
            <person name="Yamazaki M."/>
            <person name="Watanabe K."/>
            <person name="Kumagai A."/>
            <person name="Itakura S."/>
            <person name="Fukuzumi Y."/>
            <person name="Fujimori Y."/>
            <person name="Komiyama M."/>
            <person name="Tashiro H."/>
            <person name="Tanigami A."/>
            <person name="Fujiwara T."/>
            <person name="Ono T."/>
            <person name="Yamada K."/>
            <person name="Fujii Y."/>
            <person name="Ozaki K."/>
            <person name="Hirao M."/>
            <person name="Ohmori Y."/>
            <person name="Kawabata A."/>
            <person name="Hikiji T."/>
            <person name="Kobatake N."/>
            <person name="Inagaki H."/>
            <person name="Ikema Y."/>
            <person name="Okamoto S."/>
            <person name="Okitani R."/>
            <person name="Kawakami T."/>
            <person name="Noguchi S."/>
            <person name="Itoh T."/>
            <person name="Shigeta K."/>
            <person name="Senba T."/>
            <person name="Matsumura K."/>
            <person name="Nakajima Y."/>
            <person name="Mizuno T."/>
            <person name="Morinaga M."/>
            <person name="Sasaki M."/>
            <person name="Togashi T."/>
            <person name="Oyama M."/>
            <person name="Hata H."/>
            <person name="Watanabe M."/>
            <person name="Komatsu T."/>
            <person name="Mizushima-Sugano J."/>
            <person name="Satoh T."/>
            <person name="Shirai Y."/>
            <person name="Takahashi Y."/>
            <person name="Nakagawa K."/>
            <person name="Okumura K."/>
            <person name="Nagase T."/>
            <person name="Nomura N."/>
            <person name="Kikuchi H."/>
            <person name="Masuho Y."/>
            <person name="Yamashita R."/>
            <person name="Nakai K."/>
            <person name="Yada T."/>
            <person name="Nakamura Y."/>
            <person name="Ohara O."/>
            <person name="Isogai T."/>
            <person name="Sugano S."/>
        </authorList>
    </citation>
    <scope>NUCLEOTIDE SEQUENCE [LARGE SCALE MRNA]</scope>
    <source>
        <tissue>Synovial cell</tissue>
    </source>
</reference>
<reference key="6">
    <citation type="submission" date="2003-05" db="EMBL/GenBank/DDBJ databases">
        <title>Cloning of human full-length CDSs in BD Creator(TM) system donor vector.</title>
        <authorList>
            <person name="Kalnine N."/>
            <person name="Chen X."/>
            <person name="Rolfs A."/>
            <person name="Halleck A."/>
            <person name="Hines L."/>
            <person name="Eisenstein S."/>
            <person name="Koundinya M."/>
            <person name="Raphael J."/>
            <person name="Moreira D."/>
            <person name="Kelley T."/>
            <person name="LaBaer J."/>
            <person name="Lin Y."/>
            <person name="Phelan M."/>
            <person name="Farmer A."/>
        </authorList>
    </citation>
    <scope>NUCLEOTIDE SEQUENCE [LARGE SCALE MRNA]</scope>
</reference>
<reference key="7">
    <citation type="submission" date="2004-06" db="EMBL/GenBank/DDBJ databases">
        <title>Cloning of human full open reading frames in Gateway(TM) system entry vector (pDONR201).</title>
        <authorList>
            <person name="Halleck A."/>
            <person name="Ebert L."/>
            <person name="Mkoundinya M."/>
            <person name="Schick M."/>
            <person name="Eisenstein S."/>
            <person name="Neubert P."/>
            <person name="Kstrang K."/>
            <person name="Schatten R."/>
            <person name="Shen B."/>
            <person name="Henze S."/>
            <person name="Mar W."/>
            <person name="Korn B."/>
            <person name="Zuo D."/>
            <person name="Hu Y."/>
            <person name="LaBaer J."/>
        </authorList>
    </citation>
    <scope>NUCLEOTIDE SEQUENCE [LARGE SCALE MRNA]</scope>
</reference>
<reference key="8">
    <citation type="journal article" date="2001" name="Nature">
        <title>The DNA sequence and comparative analysis of human chromosome 20.</title>
        <authorList>
            <person name="Deloukas P."/>
            <person name="Matthews L.H."/>
            <person name="Ashurst J.L."/>
            <person name="Burton J."/>
            <person name="Gilbert J.G.R."/>
            <person name="Jones M."/>
            <person name="Stavrides G."/>
            <person name="Almeida J.P."/>
            <person name="Babbage A.K."/>
            <person name="Bagguley C.L."/>
            <person name="Bailey J."/>
            <person name="Barlow K.F."/>
            <person name="Bates K.N."/>
            <person name="Beard L.M."/>
            <person name="Beare D.M."/>
            <person name="Beasley O.P."/>
            <person name="Bird C.P."/>
            <person name="Blakey S.E."/>
            <person name="Bridgeman A.M."/>
            <person name="Brown A.J."/>
            <person name="Buck D."/>
            <person name="Burrill W.D."/>
            <person name="Butler A.P."/>
            <person name="Carder C."/>
            <person name="Carter N.P."/>
            <person name="Chapman J.C."/>
            <person name="Clamp M."/>
            <person name="Clark G."/>
            <person name="Clark L.N."/>
            <person name="Clark S.Y."/>
            <person name="Clee C.M."/>
            <person name="Clegg S."/>
            <person name="Cobley V.E."/>
            <person name="Collier R.E."/>
            <person name="Connor R.E."/>
            <person name="Corby N.R."/>
            <person name="Coulson A."/>
            <person name="Coville G.J."/>
            <person name="Deadman R."/>
            <person name="Dhami P.D."/>
            <person name="Dunn M."/>
            <person name="Ellington A.G."/>
            <person name="Frankland J.A."/>
            <person name="Fraser A."/>
            <person name="French L."/>
            <person name="Garner P."/>
            <person name="Grafham D.V."/>
            <person name="Griffiths C."/>
            <person name="Griffiths M.N.D."/>
            <person name="Gwilliam R."/>
            <person name="Hall R.E."/>
            <person name="Hammond S."/>
            <person name="Harley J.L."/>
            <person name="Heath P.D."/>
            <person name="Ho S."/>
            <person name="Holden J.L."/>
            <person name="Howden P.J."/>
            <person name="Huckle E."/>
            <person name="Hunt A.R."/>
            <person name="Hunt S.E."/>
            <person name="Jekosch K."/>
            <person name="Johnson C.M."/>
            <person name="Johnson D."/>
            <person name="Kay M.P."/>
            <person name="Kimberley A.M."/>
            <person name="King A."/>
            <person name="Knights A."/>
            <person name="Laird G.K."/>
            <person name="Lawlor S."/>
            <person name="Lehvaeslaiho M.H."/>
            <person name="Leversha M.A."/>
            <person name="Lloyd C."/>
            <person name="Lloyd D.M."/>
            <person name="Lovell J.D."/>
            <person name="Marsh V.L."/>
            <person name="Martin S.L."/>
            <person name="McConnachie L.J."/>
            <person name="McLay K."/>
            <person name="McMurray A.A."/>
            <person name="Milne S.A."/>
            <person name="Mistry D."/>
            <person name="Moore M.J.F."/>
            <person name="Mullikin J.C."/>
            <person name="Nickerson T."/>
            <person name="Oliver K."/>
            <person name="Parker A."/>
            <person name="Patel R."/>
            <person name="Pearce T.A.V."/>
            <person name="Peck A.I."/>
            <person name="Phillimore B.J.C.T."/>
            <person name="Prathalingam S.R."/>
            <person name="Plumb R.W."/>
            <person name="Ramsay H."/>
            <person name="Rice C.M."/>
            <person name="Ross M.T."/>
            <person name="Scott C.E."/>
            <person name="Sehra H.K."/>
            <person name="Shownkeen R."/>
            <person name="Sims S."/>
            <person name="Skuce C.D."/>
            <person name="Smith M.L."/>
            <person name="Soderlund C."/>
            <person name="Steward C.A."/>
            <person name="Sulston J.E."/>
            <person name="Swann R.M."/>
            <person name="Sycamore N."/>
            <person name="Taylor R."/>
            <person name="Tee L."/>
            <person name="Thomas D.W."/>
            <person name="Thorpe A."/>
            <person name="Tracey A."/>
            <person name="Tromans A.C."/>
            <person name="Vaudin M."/>
            <person name="Wall M."/>
            <person name="Wallis J.M."/>
            <person name="Whitehead S.L."/>
            <person name="Whittaker P."/>
            <person name="Willey D.L."/>
            <person name="Williams L."/>
            <person name="Williams S.A."/>
            <person name="Wilming L."/>
            <person name="Wray P.W."/>
            <person name="Hubbard T."/>
            <person name="Durbin R.M."/>
            <person name="Bentley D.R."/>
            <person name="Beck S."/>
            <person name="Rogers J."/>
        </authorList>
    </citation>
    <scope>NUCLEOTIDE SEQUENCE [LARGE SCALE GENOMIC DNA]</scope>
</reference>
<reference key="9">
    <citation type="submission" date="2005-09" db="EMBL/GenBank/DDBJ databases">
        <authorList>
            <person name="Mural R.J."/>
            <person name="Istrail S."/>
            <person name="Sutton G.G."/>
            <person name="Florea L."/>
            <person name="Halpern A.L."/>
            <person name="Mobarry C.M."/>
            <person name="Lippert R."/>
            <person name="Walenz B."/>
            <person name="Shatkay H."/>
            <person name="Dew I."/>
            <person name="Miller J.R."/>
            <person name="Flanigan M.J."/>
            <person name="Edwards N.J."/>
            <person name="Bolanos R."/>
            <person name="Fasulo D."/>
            <person name="Halldorsson B.V."/>
            <person name="Hannenhalli S."/>
            <person name="Turner R."/>
            <person name="Yooseph S."/>
            <person name="Lu F."/>
            <person name="Nusskern D.R."/>
            <person name="Shue B.C."/>
            <person name="Zheng X.H."/>
            <person name="Zhong F."/>
            <person name="Delcher A.L."/>
            <person name="Huson D.H."/>
            <person name="Kravitz S.A."/>
            <person name="Mouchard L."/>
            <person name="Reinert K."/>
            <person name="Remington K.A."/>
            <person name="Clark A.G."/>
            <person name="Waterman M.S."/>
            <person name="Eichler E.E."/>
            <person name="Adams M.D."/>
            <person name="Hunkapiller M.W."/>
            <person name="Myers E.W."/>
            <person name="Venter J.C."/>
        </authorList>
    </citation>
    <scope>NUCLEOTIDE SEQUENCE [LARGE SCALE GENOMIC DNA]</scope>
</reference>
<reference key="10">
    <citation type="journal article" date="2004" name="Genome Res.">
        <title>The status, quality, and expansion of the NIH full-length cDNA project: the Mammalian Gene Collection (MGC).</title>
        <authorList>
            <consortium name="The MGC Project Team"/>
        </authorList>
    </citation>
    <scope>NUCLEOTIDE SEQUENCE [LARGE SCALE MRNA]</scope>
    <source>
        <tissue>Brain</tissue>
    </source>
</reference>
<reference key="11">
    <citation type="journal article" date="1982" name="Proc. Natl. Acad. Sci. U.S.A.">
        <title>Human gamma-trace, a basic microprotein: amino acid sequence and presence in the adenohypophysis.</title>
        <authorList>
            <person name="Grubb A."/>
            <person name="Loefberg H."/>
        </authorList>
    </citation>
    <scope>PROTEIN SEQUENCE OF 27-146</scope>
</reference>
<reference key="12">
    <citation type="journal article" date="1984" name="Biochem. Biophys. Res. Commun.">
        <title>Human cystatin, a new protein inhibitor of cysteine proteinases.</title>
        <authorList>
            <person name="Brzin J."/>
            <person name="Popovic T."/>
            <person name="Turk V."/>
        </authorList>
    </citation>
    <scope>PROTEIN SEQUENCE OF 27-76</scope>
</reference>
<reference key="13">
    <citation type="journal article" date="1983" name="Hoppe-Seyler's Z. Physiol. Chem.">
        <title>Protein inhibitors of cysteine proteinases. III. Amino-acid sequence of cystatin from chicken egg white.</title>
        <authorList>
            <person name="Turk V."/>
            <person name="Brzin J."/>
            <person name="Longer M."/>
            <person name="Ritonja A."/>
            <person name="Eropkin M."/>
            <person name="Borchart U."/>
            <person name="Machleidt W."/>
        </authorList>
    </citation>
    <scope>PROTEIN SEQUENCE OF 27-73</scope>
</reference>
<reference key="14">
    <citation type="journal article" date="2004" name="Protein Sci.">
        <title>Signal peptide prediction based on analysis of experimentally verified cleavage sites.</title>
        <authorList>
            <person name="Zhang Z."/>
            <person name="Henzel W.J."/>
        </authorList>
    </citation>
    <scope>PROTEIN SEQUENCE OF 27-41</scope>
</reference>
<reference key="15">
    <citation type="journal article" date="1984" name="FEBS Lett.">
        <title>The disulphide bridges of human cystatin C (gamma-trace) and chicken cystatin.</title>
        <authorList>
            <person name="Grubb A."/>
            <person name="Loefberg H."/>
            <person name="Barrett A.J."/>
        </authorList>
    </citation>
    <scope>DISULFIDE BONDS</scope>
</reference>
<reference key="16">
    <citation type="journal article" date="2004" name="Proteomics">
        <title>Cystatin C as a potential cerebrospinal fluid marker for the diagnosis of Creutzfeldt-Jakob disease.</title>
        <authorList>
            <person name="Sanchez J.C."/>
            <person name="Guillaume E."/>
            <person name="Lescuyer P."/>
            <person name="Allard L."/>
            <person name="Carrette O."/>
            <person name="Scherl A."/>
            <person name="Burgess J."/>
            <person name="Corthals G.L."/>
            <person name="Burkhard P.R."/>
            <person name="Hochstrasser D.F."/>
        </authorList>
    </citation>
    <scope>TISSUE SPECIFICITY</scope>
</reference>
<reference key="17">
    <citation type="journal article" date="2007" name="Exp. Eye Res.">
        <title>A dual Golgi- and mitochondria-localised Ala25Ser precursor cystatin C: an additional tool for characterising intracellular mis-localisation leading to increased AMD susceptibility.</title>
        <authorList>
            <person name="Ratnayaka A."/>
            <person name="Paraoan L."/>
            <person name="Spiller D.G."/>
            <person name="Hiscott P."/>
            <person name="Nelson G."/>
            <person name="White M.R."/>
            <person name="Grierson I."/>
        </authorList>
    </citation>
    <scope>MUTAGENESIS OF ALA-25</scope>
</reference>
<reference key="18">
    <citation type="journal article" date="2009" name="Nat. Methods">
        <title>Enrichment of glycopeptides for glycan structure and attachment site identification.</title>
        <authorList>
            <person name="Nilsson J."/>
            <person name="Rueetschi U."/>
            <person name="Halim A."/>
            <person name="Hesse C."/>
            <person name="Carlsohn E."/>
            <person name="Brinkmalm G."/>
            <person name="Larson G."/>
        </authorList>
    </citation>
    <scope>GLYCOSYLATION [LARGE SCALE ANALYSIS]</scope>
    <scope>STRUCTURE OF CARBOHYDRATES</scope>
    <scope>CHARACTERIZATION OF VARIANT ARMD11 THR-25</scope>
    <source>
        <tissue>Cerebrospinal fluid</tissue>
    </source>
</reference>
<reference key="19">
    <citation type="journal article" date="2010" name="J. Am. Soc. Mass Spectrom.">
        <title>Confident assignment of intact mass tags to human salivary cystatins using top-down Fourier-transform ion cyclotron resonance mass spectrometry.</title>
        <authorList>
            <person name="Ryan C.M."/>
            <person name="Souda P."/>
            <person name="Halgand F."/>
            <person name="Wong D.T."/>
            <person name="Loo J.A."/>
            <person name="Faull K.F."/>
            <person name="Whitelegge J.P."/>
        </authorList>
    </citation>
    <scope>DISULFIDE BONDS</scope>
    <scope>TISSUE SPECIFICITY</scope>
    <scope>SUBCELLULAR LOCATION</scope>
    <scope>MASS SPECTROMETRY</scope>
    <source>
        <tissue>Saliva</tissue>
    </source>
</reference>
<reference key="20">
    <citation type="journal article" date="2011" name="BMC Syst. Biol.">
        <title>Initial characterization of the human central proteome.</title>
        <authorList>
            <person name="Burkard T.R."/>
            <person name="Planyavsky M."/>
            <person name="Kaupe I."/>
            <person name="Breitwieser F.P."/>
            <person name="Buerckstuemmer T."/>
            <person name="Bennett K.L."/>
            <person name="Superti-Furga G."/>
            <person name="Colinge J."/>
        </authorList>
    </citation>
    <scope>IDENTIFICATION BY MASS SPECTROMETRY [LARGE SCALE ANALYSIS]</scope>
</reference>
<reference key="21">
    <citation type="journal article" date="2012" name="J. Proteome Res.">
        <title>Resveratrol-induced changes of the human adipocyte secretion profile.</title>
        <authorList>
            <person name="Rosenow A."/>
            <person name="Noben J.P."/>
            <person name="Jocken J."/>
            <person name="Kallendrusch S."/>
            <person name="Fischer-Posovszky P."/>
            <person name="Mariman E.C."/>
            <person name="Renes J."/>
        </authorList>
    </citation>
    <scope>IDENTIFICATION BY MASS SPECTROMETRY [LARGE SCALE ANALYSIS]</scope>
</reference>
<reference key="22">
    <citation type="journal article" date="2015" name="Cell">
        <title>A single kinase generates the majority of the secreted phosphoproteome.</title>
        <authorList>
            <person name="Tagliabracci V.S."/>
            <person name="Wiley S.E."/>
            <person name="Guo X."/>
            <person name="Kinch L.N."/>
            <person name="Durrant E."/>
            <person name="Wen J."/>
            <person name="Xiao J."/>
            <person name="Cui J."/>
            <person name="Nguyen K.B."/>
            <person name="Engel J.L."/>
            <person name="Coon J.J."/>
            <person name="Grishin N."/>
            <person name="Pinna L.A."/>
            <person name="Pagliarini D.J."/>
            <person name="Dixon J.E."/>
        </authorList>
    </citation>
    <scope>PHOSPHORYLATION AT SER-43</scope>
</reference>
<reference key="23">
    <citation type="journal article" date="2015" name="Proteomics">
        <title>N-terminome analysis of the human mitochondrial proteome.</title>
        <authorList>
            <person name="Vaca Jacome A.S."/>
            <person name="Rabilloud T."/>
            <person name="Schaeffer-Reiss C."/>
            <person name="Rompais M."/>
            <person name="Ayoub D."/>
            <person name="Lane L."/>
            <person name="Bairoch A."/>
            <person name="Van Dorsselaer A."/>
            <person name="Carapito C."/>
        </authorList>
    </citation>
    <scope>IDENTIFICATION BY MASS SPECTROMETRY [LARGE SCALE ANALYSIS]</scope>
</reference>
<reference evidence="18" key="24">
    <citation type="journal article" date="2001" name="Nat. Struct. Biol.">
        <title>Human cystatin C, an amyloidogenic protein, dimerizes through three-dimensional domain swapping.</title>
        <authorList>
            <person name="Janowski R."/>
            <person name="Kozak M."/>
            <person name="Jankowska E."/>
            <person name="Grzonka Z."/>
            <person name="Grubb A."/>
            <person name="Abrahamson M."/>
            <person name="Jaskolski M."/>
        </authorList>
    </citation>
    <scope>X-RAY CRYSTALLOGRAPHY (2.5 ANGSTROMS) OF 27-146</scope>
    <scope>DISULFIDE BONDS</scope>
</reference>
<reference evidence="19" key="25">
    <citation type="journal article" date="2005" name="Proteins">
        <title>3D domain-swapped human cystatin C with amyloid-like intermolecular beta-sheets.</title>
        <authorList>
            <person name="Janowski R."/>
            <person name="Kozak M."/>
            <person name="Abrahamson M."/>
            <person name="Grubb A."/>
            <person name="Jaskolski M."/>
        </authorList>
    </citation>
    <scope>X-RAY CRYSTALLOGRAPHY (3.03 ANGSTROMS) OF 27-146</scope>
    <scope>DISULFIDE BONDS</scope>
</reference>
<reference key="26">
    <citation type="journal article" date="1992" name="Hum. Genet.">
        <title>Hereditary cystatin C amyloid angiopathy: identification of the disease-causing mutation and specific diagnosis by polymerase chain reaction based analysis.</title>
        <authorList>
            <person name="Abrahamson M."/>
            <person name="Jonsdottir S."/>
            <person name="Olafsson I."/>
            <person name="Jensson O."/>
            <person name="Grubb A."/>
        </authorList>
    </citation>
    <scope>VARIANT CAA-CST3 GLN-94</scope>
    <scope>INVOLVEMENT IN CAA-CST3</scope>
</reference>
<reference key="27">
    <citation type="journal article" date="2002" name="Br. J. Ophthalmol.">
        <title>CST3 genotype associated with exudative age related macular degeneration.</title>
        <authorList>
            <person name="Zurdel J."/>
            <person name="Finckh U."/>
            <person name="Menzer G."/>
            <person name="Nitsch R.M."/>
            <person name="Richard G."/>
        </authorList>
    </citation>
    <scope>VARIANT ARMD11 THR-25</scope>
</reference>
<protein>
    <recommendedName>
        <fullName>Cystatin-C</fullName>
    </recommendedName>
    <alternativeName>
        <fullName>Cystatin-3</fullName>
    </alternativeName>
    <alternativeName>
        <fullName>Gamma-trace</fullName>
    </alternativeName>
    <alternativeName>
        <fullName>Neuroendocrine basic polypeptide</fullName>
    </alternativeName>
    <alternativeName>
        <fullName>Post-gamma-globulin</fullName>
    </alternativeName>
</protein>